<evidence type="ECO:0000250" key="1">
    <source>
        <dbReference type="UniProtKB" id="Q02936"/>
    </source>
</evidence>
<evidence type="ECO:0000250" key="2">
    <source>
        <dbReference type="UniProtKB" id="Q15465"/>
    </source>
</evidence>
<evidence type="ECO:0000250" key="3">
    <source>
        <dbReference type="UniProtKB" id="Q62226"/>
    </source>
</evidence>
<evidence type="ECO:0000255" key="4"/>
<evidence type="ECO:0000256" key="5">
    <source>
        <dbReference type="SAM" id="MobiDB-lite"/>
    </source>
</evidence>
<evidence type="ECO:0000312" key="6">
    <source>
        <dbReference type="EMBL" id="EDW68258.1"/>
    </source>
</evidence>
<name>HH_DROVI</name>
<accession>B4LZT9</accession>
<feature type="signal peptide" evidence="4">
    <location>
        <begin position="1"/>
        <end position="19"/>
    </location>
</feature>
<feature type="propeptide" id="PRO_0000383082" evidence="4">
    <location>
        <begin position="20"/>
        <end position="92"/>
    </location>
</feature>
<feature type="chain" id="PRO_0000383083" description="Protein hedgehog" evidence="1">
    <location>
        <begin position="93"/>
        <end position="483"/>
    </location>
</feature>
<feature type="chain" id="PRO_0000383084" description="Protein hedgehog N-product" evidence="1">
    <location>
        <begin position="93"/>
        <end position="266"/>
    </location>
</feature>
<feature type="region of interest" description="Disordered" evidence="5">
    <location>
        <begin position="28"/>
        <end position="57"/>
    </location>
</feature>
<feature type="compositionally biased region" description="Low complexity" evidence="5">
    <location>
        <begin position="41"/>
        <end position="50"/>
    </location>
</feature>
<feature type="binding site" evidence="2">
    <location>
        <position position="157"/>
    </location>
    <ligand>
        <name>Ca(2+)</name>
        <dbReference type="ChEBI" id="CHEBI:29108"/>
        <label>1</label>
    </ligand>
</feature>
<feature type="binding site" evidence="2">
    <location>
        <position position="158"/>
    </location>
    <ligand>
        <name>Ca(2+)</name>
        <dbReference type="ChEBI" id="CHEBI:29108"/>
        <label>1</label>
    </ligand>
</feature>
<feature type="binding site" evidence="2">
    <location>
        <position position="158"/>
    </location>
    <ligand>
        <name>Ca(2+)</name>
        <dbReference type="ChEBI" id="CHEBI:29108"/>
        <label>2</label>
    </ligand>
</feature>
<feature type="binding site" evidence="2">
    <location>
        <position position="163"/>
    </location>
    <ligand>
        <name>Ca(2+)</name>
        <dbReference type="ChEBI" id="CHEBI:29108"/>
        <label>1</label>
    </ligand>
</feature>
<feature type="binding site" evidence="2">
    <location>
        <position position="193"/>
    </location>
    <ligand>
        <name>Ca(2+)</name>
        <dbReference type="ChEBI" id="CHEBI:29108"/>
        <label>1</label>
    </ligand>
</feature>
<feature type="binding site" evidence="2">
    <location>
        <position position="194"/>
    </location>
    <ligand>
        <name>Ca(2+)</name>
        <dbReference type="ChEBI" id="CHEBI:29108"/>
        <label>1</label>
    </ligand>
</feature>
<feature type="binding site" evidence="2">
    <location>
        <position position="194"/>
    </location>
    <ligand>
        <name>Ca(2+)</name>
        <dbReference type="ChEBI" id="CHEBI:29108"/>
        <label>2</label>
    </ligand>
</feature>
<feature type="binding site" evidence="2">
    <location>
        <position position="197"/>
    </location>
    <ligand>
        <name>Ca(2+)</name>
        <dbReference type="ChEBI" id="CHEBI:29108"/>
        <label>2</label>
    </ligand>
</feature>
<feature type="binding site" evidence="2">
    <location>
        <position position="199"/>
    </location>
    <ligand>
        <name>Ca(2+)</name>
        <dbReference type="ChEBI" id="CHEBI:29108"/>
        <label>2</label>
    </ligand>
</feature>
<feature type="site" description="Cleavage; by autolysis" evidence="1">
    <location>
        <begin position="266"/>
        <end position="267"/>
    </location>
</feature>
<feature type="site" description="Involved in cholesterol transfer" evidence="1">
    <location>
        <position position="312"/>
    </location>
</feature>
<feature type="site" description="Involved in auto-cleavage" evidence="1">
    <location>
        <position position="335"/>
    </location>
</feature>
<feature type="site" description="Essential for auto-cleavage" evidence="1">
    <location>
        <position position="338"/>
    </location>
</feature>
<feature type="lipid moiety-binding region" description="N-palmitoyl cysteine" evidence="1">
    <location>
        <position position="93"/>
    </location>
</feature>
<feature type="lipid moiety-binding region" description="Cholesterol glycine ester" evidence="1">
    <location>
        <position position="266"/>
    </location>
</feature>
<organism>
    <name type="scientific">Drosophila virilis</name>
    <name type="common">Fruit fly</name>
    <dbReference type="NCBI Taxonomy" id="7244"/>
    <lineage>
        <taxon>Eukaryota</taxon>
        <taxon>Metazoa</taxon>
        <taxon>Ecdysozoa</taxon>
        <taxon>Arthropoda</taxon>
        <taxon>Hexapoda</taxon>
        <taxon>Insecta</taxon>
        <taxon>Pterygota</taxon>
        <taxon>Neoptera</taxon>
        <taxon>Endopterygota</taxon>
        <taxon>Diptera</taxon>
        <taxon>Brachycera</taxon>
        <taxon>Muscomorpha</taxon>
        <taxon>Ephydroidea</taxon>
        <taxon>Drosophilidae</taxon>
        <taxon>Drosophila</taxon>
    </lineage>
</organism>
<gene>
    <name evidence="1" type="primary">hh</name>
    <name type="ORF">GJ22641</name>
</gene>
<proteinExistence type="inferred from homology"/>
<dbReference type="EC" id="3.1.-.-" evidence="3"/>
<dbReference type="EMBL" id="CH940650">
    <property type="protein sequence ID" value="EDW68258.1"/>
    <property type="molecule type" value="Genomic_DNA"/>
</dbReference>
<dbReference type="RefSeq" id="XP_002054738.1">
    <property type="nucleotide sequence ID" value="XM_002054702.4"/>
</dbReference>
<dbReference type="SMR" id="B4LZT9"/>
<dbReference type="FunCoup" id="B4LZT9">
    <property type="interactions" value="40"/>
</dbReference>
<dbReference type="STRING" id="7244.B4LZT9"/>
<dbReference type="MEROPS" id="C46.001"/>
<dbReference type="EnsemblMetazoa" id="FBtr0238566">
    <property type="protein sequence ID" value="FBpp0237058"/>
    <property type="gene ID" value="FBgn0209745"/>
</dbReference>
<dbReference type="EnsemblMetazoa" id="XM_002054702.3">
    <property type="protein sequence ID" value="XP_002054738.1"/>
    <property type="gene ID" value="LOC6630961"/>
</dbReference>
<dbReference type="GeneID" id="6630961"/>
<dbReference type="KEGG" id="dvi:6630961"/>
<dbReference type="CTD" id="42737"/>
<dbReference type="eggNOG" id="KOG3638">
    <property type="taxonomic scope" value="Eukaryota"/>
</dbReference>
<dbReference type="HOGENOM" id="CLU_034686_0_0_1"/>
<dbReference type="InParanoid" id="B4LZT9"/>
<dbReference type="OMA" id="HWVSSLL"/>
<dbReference type="OrthoDB" id="5212at2759"/>
<dbReference type="PhylomeDB" id="B4LZT9"/>
<dbReference type="Proteomes" id="UP000008792">
    <property type="component" value="Unassembled WGS sequence"/>
</dbReference>
<dbReference type="GO" id="GO:0005737">
    <property type="term" value="C:cytoplasm"/>
    <property type="evidence" value="ECO:0007669"/>
    <property type="project" value="UniProtKB-SubCell"/>
</dbReference>
<dbReference type="GO" id="GO:0005615">
    <property type="term" value="C:extracellular space"/>
    <property type="evidence" value="ECO:0007669"/>
    <property type="project" value="TreeGrafter"/>
</dbReference>
<dbReference type="GO" id="GO:0005634">
    <property type="term" value="C:nucleus"/>
    <property type="evidence" value="ECO:0007669"/>
    <property type="project" value="UniProtKB-SubCell"/>
</dbReference>
<dbReference type="GO" id="GO:0005886">
    <property type="term" value="C:plasma membrane"/>
    <property type="evidence" value="ECO:0007669"/>
    <property type="project" value="UniProtKB-SubCell"/>
</dbReference>
<dbReference type="GO" id="GO:0005509">
    <property type="term" value="F:calcium ion binding"/>
    <property type="evidence" value="ECO:0007669"/>
    <property type="project" value="TreeGrafter"/>
</dbReference>
<dbReference type="GO" id="GO:0140853">
    <property type="term" value="F:cholesterol-protein transferase activity"/>
    <property type="evidence" value="ECO:0000250"/>
    <property type="project" value="UniProtKB"/>
</dbReference>
<dbReference type="GO" id="GO:0016015">
    <property type="term" value="F:morphogen activity"/>
    <property type="evidence" value="ECO:0007669"/>
    <property type="project" value="UniProtKB-KW"/>
</dbReference>
<dbReference type="GO" id="GO:0005113">
    <property type="term" value="F:patched binding"/>
    <property type="evidence" value="ECO:0007669"/>
    <property type="project" value="TreeGrafter"/>
</dbReference>
<dbReference type="GO" id="GO:0008233">
    <property type="term" value="F:peptidase activity"/>
    <property type="evidence" value="ECO:0000250"/>
    <property type="project" value="UniProtKB"/>
</dbReference>
<dbReference type="GO" id="GO:0009653">
    <property type="term" value="P:anatomical structure morphogenesis"/>
    <property type="evidence" value="ECO:0007669"/>
    <property type="project" value="UniProtKB-KW"/>
</dbReference>
<dbReference type="GO" id="GO:0001708">
    <property type="term" value="P:cell fate specification"/>
    <property type="evidence" value="ECO:0007669"/>
    <property type="project" value="TreeGrafter"/>
</dbReference>
<dbReference type="GO" id="GO:0007267">
    <property type="term" value="P:cell-cell signaling"/>
    <property type="evidence" value="ECO:0007669"/>
    <property type="project" value="InterPro"/>
</dbReference>
<dbReference type="GO" id="GO:0016539">
    <property type="term" value="P:intein-mediated protein splicing"/>
    <property type="evidence" value="ECO:0007669"/>
    <property type="project" value="InterPro"/>
</dbReference>
<dbReference type="GO" id="GO:0016540">
    <property type="term" value="P:protein autoprocessing"/>
    <property type="evidence" value="ECO:0007669"/>
    <property type="project" value="InterPro"/>
</dbReference>
<dbReference type="GO" id="GO:0010468">
    <property type="term" value="P:regulation of gene expression"/>
    <property type="evidence" value="ECO:0007669"/>
    <property type="project" value="TreeGrafter"/>
</dbReference>
<dbReference type="GO" id="GO:0007367">
    <property type="term" value="P:segment polarity determination"/>
    <property type="evidence" value="ECO:0000250"/>
    <property type="project" value="UniProtKB"/>
</dbReference>
<dbReference type="GO" id="GO:0097264">
    <property type="term" value="P:self proteolysis"/>
    <property type="evidence" value="ECO:0000250"/>
    <property type="project" value="UniProtKB"/>
</dbReference>
<dbReference type="GO" id="GO:0007224">
    <property type="term" value="P:smoothened signaling pathway"/>
    <property type="evidence" value="ECO:0007669"/>
    <property type="project" value="TreeGrafter"/>
</dbReference>
<dbReference type="GO" id="GO:0048731">
    <property type="term" value="P:system development"/>
    <property type="evidence" value="ECO:0007669"/>
    <property type="project" value="UniProtKB-ARBA"/>
</dbReference>
<dbReference type="CDD" id="cd00081">
    <property type="entry name" value="Hint"/>
    <property type="match status" value="1"/>
</dbReference>
<dbReference type="FunFam" id="2.170.16.10:FF:000001">
    <property type="entry name" value="Indian hedgehog"/>
    <property type="match status" value="1"/>
</dbReference>
<dbReference type="FunFam" id="3.30.1380.10:FF:000001">
    <property type="entry name" value="Indian hedgehog"/>
    <property type="match status" value="1"/>
</dbReference>
<dbReference type="Gene3D" id="3.30.1380.10">
    <property type="match status" value="1"/>
</dbReference>
<dbReference type="Gene3D" id="2.170.16.10">
    <property type="entry name" value="Hedgehog/Intein (Hint) domain"/>
    <property type="match status" value="1"/>
</dbReference>
<dbReference type="InterPro" id="IPR001657">
    <property type="entry name" value="Hedgehog"/>
</dbReference>
<dbReference type="InterPro" id="IPR001767">
    <property type="entry name" value="Hedgehog_Hint"/>
</dbReference>
<dbReference type="InterPro" id="IPR009045">
    <property type="entry name" value="Hedgehog_sig/DD-Pept_Zn-bd_sf"/>
</dbReference>
<dbReference type="InterPro" id="IPR050387">
    <property type="entry name" value="Hedgehog_Signaling"/>
</dbReference>
<dbReference type="InterPro" id="IPR000320">
    <property type="entry name" value="Hedgehog_signalling_dom"/>
</dbReference>
<dbReference type="InterPro" id="IPR003586">
    <property type="entry name" value="Hint_dom_C"/>
</dbReference>
<dbReference type="InterPro" id="IPR003587">
    <property type="entry name" value="Hint_dom_N"/>
</dbReference>
<dbReference type="InterPro" id="IPR036844">
    <property type="entry name" value="Hint_dom_sf"/>
</dbReference>
<dbReference type="InterPro" id="IPR006141">
    <property type="entry name" value="Intein_N"/>
</dbReference>
<dbReference type="PANTHER" id="PTHR11889">
    <property type="entry name" value="HEDGEHOG"/>
    <property type="match status" value="1"/>
</dbReference>
<dbReference type="PANTHER" id="PTHR11889:SF31">
    <property type="entry name" value="PROTEIN HEDGEHOG"/>
    <property type="match status" value="1"/>
</dbReference>
<dbReference type="Pfam" id="PF01085">
    <property type="entry name" value="HH_signal"/>
    <property type="match status" value="1"/>
</dbReference>
<dbReference type="Pfam" id="PF01079">
    <property type="entry name" value="Hint"/>
    <property type="match status" value="1"/>
</dbReference>
<dbReference type="PIRSF" id="PIRSF009400">
    <property type="entry name" value="Peptidase_C46"/>
    <property type="match status" value="1"/>
</dbReference>
<dbReference type="PRINTS" id="PR00632">
    <property type="entry name" value="SONICHHOG"/>
</dbReference>
<dbReference type="SMART" id="SM00305">
    <property type="entry name" value="HintC"/>
    <property type="match status" value="1"/>
</dbReference>
<dbReference type="SMART" id="SM00306">
    <property type="entry name" value="HintN"/>
    <property type="match status" value="1"/>
</dbReference>
<dbReference type="SUPFAM" id="SSF55166">
    <property type="entry name" value="Hedgehog/DD-peptidase"/>
    <property type="match status" value="1"/>
</dbReference>
<dbReference type="SUPFAM" id="SSF51294">
    <property type="entry name" value="Hedgehog/intein (Hint) domain"/>
    <property type="match status" value="1"/>
</dbReference>
<dbReference type="PROSITE" id="PS50817">
    <property type="entry name" value="INTEIN_N_TER"/>
    <property type="match status" value="1"/>
</dbReference>
<reference evidence="6" key="1">
    <citation type="journal article" date="2007" name="Nature">
        <title>Evolution of genes and genomes on the Drosophila phylogeny.</title>
        <authorList>
            <consortium name="Drosophila 12 genomes consortium"/>
        </authorList>
    </citation>
    <scope>NUCLEOTIDE SEQUENCE [LARGE SCALE GENOMIC DNA]</scope>
    <source>
        <strain evidence="6">Tucson 15010-1051.87</strain>
    </source>
</reference>
<keyword id="KW-0068">Autocatalytic cleavage</keyword>
<keyword id="KW-0106">Calcium</keyword>
<keyword id="KW-1003">Cell membrane</keyword>
<keyword id="KW-0963">Cytoplasm</keyword>
<keyword id="KW-0217">Developmental protein</keyword>
<keyword id="KW-0378">Hydrolase</keyword>
<keyword id="KW-0449">Lipoprotein</keyword>
<keyword id="KW-0472">Membrane</keyword>
<keyword id="KW-0479">Metal-binding</keyword>
<keyword id="KW-0504">Morphogen</keyword>
<keyword id="KW-0539">Nucleus</keyword>
<keyword id="KW-0564">Palmitate</keyword>
<keyword id="KW-0645">Protease</keyword>
<keyword id="KW-1185">Reference proteome</keyword>
<keyword id="KW-0709">Segmentation polarity protein</keyword>
<keyword id="KW-0732">Signal</keyword>
<keyword id="KW-0808">Transferase</keyword>
<protein>
    <recommendedName>
        <fullName evidence="1">Protein hedgehog</fullName>
        <ecNumber evidence="3">3.1.-.-</ecNumber>
    </recommendedName>
    <component>
        <recommendedName>
            <fullName evidence="1">Protein hedgehog N-product</fullName>
        </recommendedName>
    </component>
</protein>
<comment type="function">
    <molecule>Protein hedgehog</molecule>
    <text evidence="1 3">The C-terminal part of the hedgehog protein precursor displays an autoproteolysis activity that results in the cleavage of the full-length protein into two parts (N-product and C-product) (By similarity). In addition, the C-terminal part displays a cholesterol transferase activity that results by the covalent attachment of a cholesterol moiety to the C-terminal of the newly generated N-product (By similarity). Once cleaved, the C-product has no signaling activity and diffuses from the cell (By similarity).</text>
</comment>
<comment type="function">
    <molecule>Protein hedgehog N-product</molecule>
    <text evidence="1">The dually lipidated hedgehog protein N-product is a morphogen which is essential for a variety of patterning events during development. Establishes the anterior-posterior axis of the embryonic segments and patterns the larval imaginal disks. Binds to the patched (ptc) receptor, which functions in association with smoothened (smo), to activate the transcription of target genes wingless (wg), decapentaplegic (dpp) and ptc. In the absence of hh, ptc represses the constitutive signaling activity of smo through fused (fu). Essential component of a signaling pathway which regulates the Duox-dependent gut immune response to bacterial uracil; required to activate Cad99C-dependent endosome formation, norpA-dependent Ca2+ mobilization and p38 MAPK, which are essential steps in the Duox-dependent production of reactive oxygen species (ROS) in response to intestinal bacterial infection. During photoreceptor differentiation, it up-regulates transcription of Ubr3, which in turn promotes the hh-signaling pathway by mediating the ubiquitination and degradation of cos.</text>
</comment>
<comment type="catalytic activity">
    <molecule>Protein hedgehog</molecule>
    <reaction evidence="3">
        <text>glycyl-L-cysteinyl-[protein] + cholesterol + H(+) = [protein]-C-terminal glycyl cholesterol ester + N-terminal L-cysteinyl-[protein]</text>
        <dbReference type="Rhea" id="RHEA:59504"/>
        <dbReference type="Rhea" id="RHEA-COMP:12707"/>
        <dbReference type="Rhea" id="RHEA-COMP:15369"/>
        <dbReference type="Rhea" id="RHEA-COMP:15374"/>
        <dbReference type="ChEBI" id="CHEBI:15378"/>
        <dbReference type="ChEBI" id="CHEBI:16113"/>
        <dbReference type="ChEBI" id="CHEBI:65250"/>
        <dbReference type="ChEBI" id="CHEBI:143135"/>
        <dbReference type="ChEBI" id="CHEBI:143140"/>
    </reaction>
    <physiologicalReaction direction="left-to-right" evidence="3">
        <dbReference type="Rhea" id="RHEA:59505"/>
    </physiologicalReaction>
</comment>
<comment type="subunit">
    <text evidence="1">Interacts with shf.</text>
</comment>
<comment type="subcellular location">
    <subcellularLocation>
        <location evidence="1">Nucleus</location>
    </subcellularLocation>
    <subcellularLocation>
        <location evidence="1">Cytoplasm</location>
    </subcellularLocation>
    <text evidence="1">Nuclear up to embryonic stage 10 and then at stage 11 shifts to the cytoplasm. Also secreted in either cleaved or uncleaved form to mediate signaling to other cells.</text>
</comment>
<comment type="subcellular location">
    <molecule>Protein hedgehog N-product</molecule>
    <subcellularLocation>
        <location evidence="1">Cell membrane</location>
        <topology evidence="1">Lipid-anchor</topology>
    </subcellularLocation>
    <text evidence="1">The N-terminal peptide remains associated with the cell surface. Heparan sulfate proteoglycans of the extracellular matrix play an essential role in diffusion. Lipophorin is required for diffusion, probably by acting as vehicle for its movement, explaining how it can spread over long distances despite its lipidation.</text>
</comment>
<comment type="PTM">
    <molecule>Protein hedgehog</molecule>
    <text evidence="1 2 3">The C-terminal part of the hedgehog protein precursor displays an autoproteolysis activity that results in the cleavage of the full-length protein into two parts (N-product and C-product) (By similarity). In addition, the C-terminal part displays a cholesterol transferase activity that results by the covalent attachment of a cholesterol moiety to the C-terminal of the newly generated N-product (By similarity). The N-product is the active species in both local and long-range signaling, whereas the C-product has no signaling activity (By similarity).</text>
</comment>
<comment type="PTM">
    <molecule>Protein hedgehog N-product</molecule>
    <text evidence="3">Cholesterylation is required for N-product targeting to lipid rafts and multimerization.</text>
</comment>
<comment type="PTM">
    <molecule>Protein hedgehog N-product</molecule>
    <text evidence="1">N-palmitoylation by Rasp of the hedgehog N-product, within the secretory pathway, is required for the embryonic and larval patterning activities of the hedgehog signal.</text>
</comment>
<comment type="similarity">
    <text evidence="4">Belongs to the hedgehog family.</text>
</comment>
<sequence length="483" mass="53979">MDNQTVAAIWSCASATCLSLDAKRHSVETNTNDRQAPPGLSNSNNNNNNNKSTAVDADPRKLRHIAHTPRGSCFMALLLLLLLALNFRHAHSCGPGRGLGRRRERNLYPLVLKQTVPNLSEYMSGASGPIEGVIQRDSPNFKDLVPNYNRDIIFRDEEGTGADRLMSKRCREKLNTLSYSVMNEWPGVRLLVTESWDEDHQHGQESLHYEGRAVTIATSDRDQSKYGMLARLAVEAGFDWVSYVSRRHIYCSVKSDSSPFISHVHGCFTPESTALLESGAKKPLSELAIGDRVLSMNGKGQAVYSEVILFMDRNLEQMQNFVQLHTDSGAVLTVTPAHLITVWQPEREALDFVFADRVEELNYVLVHDATGELRPHRVIRVSSVRSRGVVAPLTREGTIVVDSVAASCYAVISSQSLAHWGLAPMRLLYTLQSWMPAKGQLRTAQDKSTPKDATAQQQNGLHWYANALYKVKDYVLPQSWRHD</sequence>